<evidence type="ECO:0000250" key="1"/>
<evidence type="ECO:0000255" key="2"/>
<evidence type="ECO:0000269" key="3">
    <source>
    </source>
</evidence>
<evidence type="ECO:0000305" key="4"/>
<keyword id="KW-0472">Membrane</keyword>
<keyword id="KW-1185">Reference proteome</keyword>
<keyword id="KW-0677">Repeat</keyword>
<keyword id="KW-0812">Transmembrane</keyword>
<keyword id="KW-1133">Transmembrane helix</keyword>
<keyword id="KW-0813">Transport</keyword>
<sequence>MARREVDDSYTNGSVVEVVSIEEGSKMDKEDDHQNPQAPDGGDVVVCGMPMSFTFLQMLLAEFLATFFLMFAGLGAITVEEKKGAVTFPGVAVAWGAAVMAMVYAVGHVSGAHLNPAVTLGFAVAGRFPWRRAPAYALAQTAAATAASVVLRLMFGGRHAPVPATLPGGAHAQSLVIEFVITFYLMFVIMAVATDDQAVGHMAGVAVGGTIMLNVLFAGPVSGASMNPARSIGPALVGSKYTALWVYILGPFAGAAAGAWAYSLIRLTGDRTD</sequence>
<gene>
    <name type="primary">NIP1-4</name>
    <name type="ordered locus">Os06g0552700</name>
    <name type="ordered locus">LOC_Os06g35930</name>
    <name type="ORF">P0427B07.13</name>
</gene>
<feature type="chain" id="PRO_0000286029" description="Aquaporin NIP1-4">
    <location>
        <begin position="1"/>
        <end position="273"/>
    </location>
</feature>
<feature type="transmembrane region" description="Helical; Name=1" evidence="2">
    <location>
        <begin position="59"/>
        <end position="79"/>
    </location>
</feature>
<feature type="transmembrane region" description="Helical; Name=2" evidence="2">
    <location>
        <begin position="86"/>
        <end position="106"/>
    </location>
</feature>
<feature type="transmembrane region" description="Helical; Name=3" evidence="2">
    <location>
        <begin position="133"/>
        <end position="155"/>
    </location>
</feature>
<feature type="transmembrane region" description="Helical; Name=4" evidence="2">
    <location>
        <begin position="174"/>
        <end position="194"/>
    </location>
</feature>
<feature type="transmembrane region" description="Helical; Name=5" evidence="2">
    <location>
        <begin position="198"/>
        <end position="218"/>
    </location>
</feature>
<feature type="transmembrane region" description="Helical; Name=6" evidence="2">
    <location>
        <begin position="245"/>
        <end position="265"/>
    </location>
</feature>
<feature type="short sequence motif" description="NPA 1">
    <location>
        <begin position="115"/>
        <end position="117"/>
    </location>
</feature>
<feature type="short sequence motif" description="NPA 2">
    <location>
        <begin position="227"/>
        <end position="229"/>
    </location>
</feature>
<protein>
    <recommendedName>
        <fullName>Aquaporin NIP1-4</fullName>
    </recommendedName>
    <alternativeName>
        <fullName>NOD26-like intrinsic protein 1-4</fullName>
    </alternativeName>
    <alternativeName>
        <fullName>OsNIP1;4</fullName>
    </alternativeName>
</protein>
<comment type="function">
    <text evidence="1">Aquaporins facilitate the transport of water and small neutral solutes across cell membranes.</text>
</comment>
<comment type="subcellular location">
    <subcellularLocation>
        <location evidence="4">Membrane</location>
        <topology evidence="4">Multi-pass membrane protein</topology>
    </subcellularLocation>
</comment>
<comment type="tissue specificity">
    <text evidence="3">Expressed in leaves.</text>
</comment>
<comment type="domain">
    <text>Aquaporins contain two tandem repeats each containing three membrane-spanning domains and a pore-forming loop with the signature motif Asn-Pro-Ala (NPA).</text>
</comment>
<comment type="similarity">
    <text evidence="4">Belongs to the MIP/aquaporin (TC 1.A.8) family. NIP (TC 1.A.8.12) subfamily.</text>
</comment>
<reference key="1">
    <citation type="journal article" date="2005" name="Nature">
        <title>The map-based sequence of the rice genome.</title>
        <authorList>
            <consortium name="International rice genome sequencing project (IRGSP)"/>
        </authorList>
    </citation>
    <scope>NUCLEOTIDE SEQUENCE [LARGE SCALE GENOMIC DNA]</scope>
    <source>
        <strain>cv. Nipponbare</strain>
    </source>
</reference>
<reference key="2">
    <citation type="journal article" date="2013" name="Rice">
        <title>Improvement of the Oryza sativa Nipponbare reference genome using next generation sequence and optical map data.</title>
        <authorList>
            <person name="Kawahara Y."/>
            <person name="de la Bastide M."/>
            <person name="Hamilton J.P."/>
            <person name="Kanamori H."/>
            <person name="McCombie W.R."/>
            <person name="Ouyang S."/>
            <person name="Schwartz D.C."/>
            <person name="Tanaka T."/>
            <person name="Wu J."/>
            <person name="Zhou S."/>
            <person name="Childs K.L."/>
            <person name="Davidson R.M."/>
            <person name="Lin H."/>
            <person name="Quesada-Ocampo L."/>
            <person name="Vaillancourt B."/>
            <person name="Sakai H."/>
            <person name="Lee S.S."/>
            <person name="Kim J."/>
            <person name="Numa H."/>
            <person name="Itoh T."/>
            <person name="Buell C.R."/>
            <person name="Matsumoto T."/>
        </authorList>
    </citation>
    <scope>GENOME REANNOTATION</scope>
    <source>
        <strain>cv. Nipponbare</strain>
    </source>
</reference>
<reference key="3">
    <citation type="journal article" date="2005" name="Plant Cell Physiol.">
        <title>Identification of 33 rice aquaporin genes and analysis of their expression and function.</title>
        <authorList>
            <person name="Sakurai J."/>
            <person name="Ishikawa F."/>
            <person name="Yamaguchi T."/>
            <person name="Uemura M."/>
            <person name="Maeshima M."/>
        </authorList>
    </citation>
    <scope>NOMENCLATURE</scope>
    <scope>TISSUE SPECIFICITY</scope>
</reference>
<proteinExistence type="evidence at transcript level"/>
<name>NIP14_ORYSJ</name>
<organism>
    <name type="scientific">Oryza sativa subsp. japonica</name>
    <name type="common">Rice</name>
    <dbReference type="NCBI Taxonomy" id="39947"/>
    <lineage>
        <taxon>Eukaryota</taxon>
        <taxon>Viridiplantae</taxon>
        <taxon>Streptophyta</taxon>
        <taxon>Embryophyta</taxon>
        <taxon>Tracheophyta</taxon>
        <taxon>Spermatophyta</taxon>
        <taxon>Magnoliopsida</taxon>
        <taxon>Liliopsida</taxon>
        <taxon>Poales</taxon>
        <taxon>Poaceae</taxon>
        <taxon>BOP clade</taxon>
        <taxon>Oryzoideae</taxon>
        <taxon>Oryzeae</taxon>
        <taxon>Oryzinae</taxon>
        <taxon>Oryza</taxon>
        <taxon>Oryza sativa</taxon>
    </lineage>
</organism>
<dbReference type="EMBL" id="AP003682">
    <property type="protein sequence ID" value="BAD53665.1"/>
    <property type="molecule type" value="Genomic_DNA"/>
</dbReference>
<dbReference type="EMBL" id="AP014962">
    <property type="protein sequence ID" value="BAS98200.1"/>
    <property type="molecule type" value="Genomic_DNA"/>
</dbReference>
<dbReference type="SMR" id="Q5Z9E2"/>
<dbReference type="FunCoup" id="Q5Z9E2">
    <property type="interactions" value="19"/>
</dbReference>
<dbReference type="STRING" id="39947.Q5Z9E2"/>
<dbReference type="PaxDb" id="39947-Q5Z9E2"/>
<dbReference type="EnsemblPlants" id="Os06t0552700-01">
    <property type="protein sequence ID" value="Os06t0552700-01"/>
    <property type="gene ID" value="Os06g0552700"/>
</dbReference>
<dbReference type="GeneID" id="107276403"/>
<dbReference type="Gramene" id="Os06t0552700-01">
    <property type="protein sequence ID" value="Os06t0552700-01"/>
    <property type="gene ID" value="Os06g0552700"/>
</dbReference>
<dbReference type="KEGG" id="osa:107276403"/>
<dbReference type="eggNOG" id="KOG0223">
    <property type="taxonomic scope" value="Eukaryota"/>
</dbReference>
<dbReference type="HOGENOM" id="CLU_020019_3_1_1"/>
<dbReference type="InParanoid" id="Q5Z9E2"/>
<dbReference type="OMA" id="WRRAPAY"/>
<dbReference type="OrthoDB" id="3222at2759"/>
<dbReference type="Proteomes" id="UP000000763">
    <property type="component" value="Chromosome 6"/>
</dbReference>
<dbReference type="Proteomes" id="UP000059680">
    <property type="component" value="Chromosome 6"/>
</dbReference>
<dbReference type="GO" id="GO:0016020">
    <property type="term" value="C:membrane"/>
    <property type="evidence" value="ECO:0007669"/>
    <property type="project" value="UniProtKB-SubCell"/>
</dbReference>
<dbReference type="GO" id="GO:0015267">
    <property type="term" value="F:channel activity"/>
    <property type="evidence" value="ECO:0007669"/>
    <property type="project" value="InterPro"/>
</dbReference>
<dbReference type="Gene3D" id="1.20.1080.10">
    <property type="entry name" value="Glycerol uptake facilitator protein"/>
    <property type="match status" value="1"/>
</dbReference>
<dbReference type="InterPro" id="IPR023271">
    <property type="entry name" value="Aquaporin-like"/>
</dbReference>
<dbReference type="InterPro" id="IPR034294">
    <property type="entry name" value="Aquaporin_transptr"/>
</dbReference>
<dbReference type="InterPro" id="IPR000425">
    <property type="entry name" value="MIP"/>
</dbReference>
<dbReference type="InterPro" id="IPR022357">
    <property type="entry name" value="MIP_CS"/>
</dbReference>
<dbReference type="NCBIfam" id="TIGR00861">
    <property type="entry name" value="MIP"/>
    <property type="match status" value="1"/>
</dbReference>
<dbReference type="PANTHER" id="PTHR45724:SF8">
    <property type="entry name" value="AQUAPORIN NIP1-4"/>
    <property type="match status" value="1"/>
</dbReference>
<dbReference type="PANTHER" id="PTHR45724">
    <property type="entry name" value="AQUAPORIN NIP2-1"/>
    <property type="match status" value="1"/>
</dbReference>
<dbReference type="Pfam" id="PF00230">
    <property type="entry name" value="MIP"/>
    <property type="match status" value="1"/>
</dbReference>
<dbReference type="PRINTS" id="PR00783">
    <property type="entry name" value="MINTRINSICP"/>
</dbReference>
<dbReference type="SUPFAM" id="SSF81338">
    <property type="entry name" value="Aquaporin-like"/>
    <property type="match status" value="1"/>
</dbReference>
<dbReference type="PROSITE" id="PS00221">
    <property type="entry name" value="MIP"/>
    <property type="match status" value="1"/>
</dbReference>
<accession>Q5Z9E2</accession>
<accession>A0A0P0WY81</accession>